<keyword id="KW-0963">Cytoplasm</keyword>
<keyword id="KW-0396">Initiation factor</keyword>
<keyword id="KW-0648">Protein biosynthesis</keyword>
<keyword id="KW-1185">Reference proteome</keyword>
<keyword id="KW-0694">RNA-binding</keyword>
<feature type="chain" id="PRO_0000364174" description="Eukaryotic translation initiation factor 3 subunit D">
    <location>
        <begin position="1"/>
        <end position="547"/>
    </location>
</feature>
<feature type="region of interest" description="Disordered" evidence="3">
    <location>
        <begin position="1"/>
        <end position="22"/>
    </location>
</feature>
<feature type="region of interest" description="Disordered" evidence="3">
    <location>
        <begin position="114"/>
        <end position="159"/>
    </location>
</feature>
<feature type="region of interest" description="RNA gate" evidence="1">
    <location>
        <begin position="284"/>
        <end position="298"/>
    </location>
</feature>
<feature type="compositionally biased region" description="Gly residues" evidence="3">
    <location>
        <begin position="126"/>
        <end position="148"/>
    </location>
</feature>
<name>EIF3D_CRYNJ</name>
<sequence length="547" mass="60305">MANFVLPPIHDNSDGSWGPSTSTLPAQFKDIPYAPFSKSDKITRIADWHDPQAEAAAGTRTARTVQSGGRRTAYGAAEGTVFGFVHDEDEKSFSLVDSGVRVGARGKAPIRGRSVRGVASARGARGRGGQRGGFSTRGGRGGARGGYGDWNKPQRTRDSSVTIGPEWEVLEEIDFNRLSKLSLSVEDPEDLASYGTVQAYDKTFDRINTRNEKPLEIVNRVRYNPSTSDDPIISQYAEKKEAQIFATDSILAVLMCAGRSVNSWDIIIEHRNGQVFFDKRESGPLDYITVNENAADPPVDSDDVSNINSAGSLSLEATYISHNFSSQVSANSKSKAYTPNPNPFYSPEVESEPPASTLYKYRKFDLSIDEEEQFSVILRTEADAYLGKKEVLVTVKALNEYDPRVQGGSGKPLDWRKNLDTQKGAILASEMKNNSAKFARWAIQSILAGVEQMKMGYISRANPRDAQRHTIVGVQSFKPLDFARQMNVSLANGWGIVRTIADLVLKQPEGKFVLVKDPNNPLVRLYKVPDDTFEAGAEEEEEEQDEE</sequence>
<organism>
    <name type="scientific">Cryptococcus neoformans var. neoformans serotype D (strain JEC21 / ATCC MYA-565)</name>
    <name type="common">Filobasidiella neoformans</name>
    <dbReference type="NCBI Taxonomy" id="214684"/>
    <lineage>
        <taxon>Eukaryota</taxon>
        <taxon>Fungi</taxon>
        <taxon>Dikarya</taxon>
        <taxon>Basidiomycota</taxon>
        <taxon>Agaricomycotina</taxon>
        <taxon>Tremellomycetes</taxon>
        <taxon>Tremellales</taxon>
        <taxon>Cryptococcaceae</taxon>
        <taxon>Cryptococcus</taxon>
        <taxon>Cryptococcus neoformans species complex</taxon>
    </lineage>
</organism>
<gene>
    <name type="ordered locus">CNB01420</name>
</gene>
<comment type="function">
    <text evidence="2">mRNA cap-binding component of the eukaryotic translation initiation factor 3 (eIF-3) complex, which is involved in protein synthesis of a specialized repertoire of mRNAs and, together with other initiation factors, stimulates binding of mRNA and methionyl-tRNAi to the 40S ribosome. The eIF-3 complex specifically targets and initiates translation of a subset of mRNAs involved in cell proliferation. In the eIF-3 complex, eif3d specifically recognizes and binds the 7-methylguanosine cap of a subset of mRNAs.</text>
</comment>
<comment type="subunit">
    <text evidence="2">Component of the eukaryotic translation initiation factor 3 (eIF-3) complex.</text>
</comment>
<comment type="subcellular location">
    <subcellularLocation>
        <location evidence="2">Cytoplasm</location>
    </subcellularLocation>
</comment>
<comment type="domain">
    <text evidence="2">The RNA gate region regulates mRNA cap recognition to prevent promiscuous mRNA-binding before assembly of eif3d into the full eukaryotic translation initiation factor 3 (eIF-3) complex.</text>
</comment>
<comment type="similarity">
    <text evidence="2">Belongs to the eIF-3 subunit D family.</text>
</comment>
<evidence type="ECO:0000250" key="1">
    <source>
        <dbReference type="UniProtKB" id="K7IM66"/>
    </source>
</evidence>
<evidence type="ECO:0000255" key="2">
    <source>
        <dbReference type="HAMAP-Rule" id="MF_03003"/>
    </source>
</evidence>
<evidence type="ECO:0000256" key="3">
    <source>
        <dbReference type="SAM" id="MobiDB-lite"/>
    </source>
</evidence>
<dbReference type="EMBL" id="AE017342">
    <property type="protein sequence ID" value="AAW41507.1"/>
    <property type="molecule type" value="Genomic_DNA"/>
</dbReference>
<dbReference type="RefSeq" id="XP_568814.1">
    <property type="nucleotide sequence ID" value="XM_568814.2"/>
</dbReference>
<dbReference type="SMR" id="P0CN48"/>
<dbReference type="FunCoup" id="P0CN48">
    <property type="interactions" value="789"/>
</dbReference>
<dbReference type="STRING" id="214684.P0CN48"/>
<dbReference type="PaxDb" id="214684-P0CN48"/>
<dbReference type="EnsemblFungi" id="AAW41507">
    <property type="protein sequence ID" value="AAW41507"/>
    <property type="gene ID" value="CNB01420"/>
</dbReference>
<dbReference type="GeneID" id="3255656"/>
<dbReference type="KEGG" id="cne:CNB01420"/>
<dbReference type="VEuPathDB" id="FungiDB:CNB01420"/>
<dbReference type="eggNOG" id="KOG2479">
    <property type="taxonomic scope" value="Eukaryota"/>
</dbReference>
<dbReference type="HOGENOM" id="CLU_024521_2_0_1"/>
<dbReference type="InParanoid" id="P0CN48"/>
<dbReference type="OMA" id="FMDKRDN"/>
<dbReference type="OrthoDB" id="16538at2759"/>
<dbReference type="Proteomes" id="UP000002149">
    <property type="component" value="Chromosome 2"/>
</dbReference>
<dbReference type="GO" id="GO:0005829">
    <property type="term" value="C:cytosol"/>
    <property type="evidence" value="ECO:0007669"/>
    <property type="project" value="EnsemblFungi"/>
</dbReference>
<dbReference type="GO" id="GO:0016282">
    <property type="term" value="C:eukaryotic 43S preinitiation complex"/>
    <property type="evidence" value="ECO:0007669"/>
    <property type="project" value="UniProtKB-UniRule"/>
</dbReference>
<dbReference type="GO" id="GO:0033290">
    <property type="term" value="C:eukaryotic 48S preinitiation complex"/>
    <property type="evidence" value="ECO:0007669"/>
    <property type="project" value="UniProtKB-UniRule"/>
</dbReference>
<dbReference type="GO" id="GO:0005852">
    <property type="term" value="C:eukaryotic translation initiation factor 3 complex"/>
    <property type="evidence" value="ECO:0000318"/>
    <property type="project" value="GO_Central"/>
</dbReference>
<dbReference type="GO" id="GO:0071540">
    <property type="term" value="C:eukaryotic translation initiation factor 3 complex, eIF3e"/>
    <property type="evidence" value="ECO:0007669"/>
    <property type="project" value="EnsemblFungi"/>
</dbReference>
<dbReference type="GO" id="GO:0071541">
    <property type="term" value="C:eukaryotic translation initiation factor 3 complex, eIF3m"/>
    <property type="evidence" value="ECO:0007669"/>
    <property type="project" value="EnsemblFungi"/>
</dbReference>
<dbReference type="GO" id="GO:0098808">
    <property type="term" value="F:mRNA cap binding"/>
    <property type="evidence" value="ECO:0007669"/>
    <property type="project" value="UniProtKB-UniRule"/>
</dbReference>
<dbReference type="GO" id="GO:0003743">
    <property type="term" value="F:translation initiation factor activity"/>
    <property type="evidence" value="ECO:0000318"/>
    <property type="project" value="GO_Central"/>
</dbReference>
<dbReference type="GO" id="GO:0002191">
    <property type="term" value="P:cap-dependent translational initiation"/>
    <property type="evidence" value="ECO:0007669"/>
    <property type="project" value="UniProtKB-UniRule"/>
</dbReference>
<dbReference type="GO" id="GO:0001732">
    <property type="term" value="P:formation of cytoplasmic translation initiation complex"/>
    <property type="evidence" value="ECO:0007669"/>
    <property type="project" value="UniProtKB-UniRule"/>
</dbReference>
<dbReference type="GO" id="GO:0006413">
    <property type="term" value="P:translational initiation"/>
    <property type="evidence" value="ECO:0000318"/>
    <property type="project" value="GO_Central"/>
</dbReference>
<dbReference type="HAMAP" id="MF_03003">
    <property type="entry name" value="eIF3d"/>
    <property type="match status" value="1"/>
</dbReference>
<dbReference type="InterPro" id="IPR007783">
    <property type="entry name" value="eIF3d"/>
</dbReference>
<dbReference type="PANTHER" id="PTHR12399">
    <property type="entry name" value="EUKARYOTIC TRANSLATION INITIATION FACTOR 3 SUBUNIT 7"/>
    <property type="match status" value="1"/>
</dbReference>
<dbReference type="PANTHER" id="PTHR12399:SF0">
    <property type="entry name" value="EUKARYOTIC TRANSLATION INITIATION FACTOR 3 SUBUNIT D"/>
    <property type="match status" value="1"/>
</dbReference>
<dbReference type="Pfam" id="PF05091">
    <property type="entry name" value="eIF-3_zeta"/>
    <property type="match status" value="1"/>
</dbReference>
<dbReference type="PIRSF" id="PIRSF016281">
    <property type="entry name" value="EIF-3_zeta"/>
    <property type="match status" value="1"/>
</dbReference>
<reference key="1">
    <citation type="journal article" date="2005" name="Science">
        <title>The genome of the basidiomycetous yeast and human pathogen Cryptococcus neoformans.</title>
        <authorList>
            <person name="Loftus B.J."/>
            <person name="Fung E."/>
            <person name="Roncaglia P."/>
            <person name="Rowley D."/>
            <person name="Amedeo P."/>
            <person name="Bruno D."/>
            <person name="Vamathevan J."/>
            <person name="Miranda M."/>
            <person name="Anderson I.J."/>
            <person name="Fraser J.A."/>
            <person name="Allen J.E."/>
            <person name="Bosdet I.E."/>
            <person name="Brent M.R."/>
            <person name="Chiu R."/>
            <person name="Doering T.L."/>
            <person name="Donlin M.J."/>
            <person name="D'Souza C.A."/>
            <person name="Fox D.S."/>
            <person name="Grinberg V."/>
            <person name="Fu J."/>
            <person name="Fukushima M."/>
            <person name="Haas B.J."/>
            <person name="Huang J.C."/>
            <person name="Janbon G."/>
            <person name="Jones S.J.M."/>
            <person name="Koo H.L."/>
            <person name="Krzywinski M.I."/>
            <person name="Kwon-Chung K.J."/>
            <person name="Lengeler K.B."/>
            <person name="Maiti R."/>
            <person name="Marra M.A."/>
            <person name="Marra R.E."/>
            <person name="Mathewson C.A."/>
            <person name="Mitchell T.G."/>
            <person name="Pertea M."/>
            <person name="Riggs F.R."/>
            <person name="Salzberg S.L."/>
            <person name="Schein J.E."/>
            <person name="Shvartsbeyn A."/>
            <person name="Shin H."/>
            <person name="Shumway M."/>
            <person name="Specht C.A."/>
            <person name="Suh B.B."/>
            <person name="Tenney A."/>
            <person name="Utterback T.R."/>
            <person name="Wickes B.L."/>
            <person name="Wortman J.R."/>
            <person name="Wye N.H."/>
            <person name="Kronstad J.W."/>
            <person name="Lodge J.K."/>
            <person name="Heitman J."/>
            <person name="Davis R.W."/>
            <person name="Fraser C.M."/>
            <person name="Hyman R.W."/>
        </authorList>
    </citation>
    <scope>NUCLEOTIDE SEQUENCE [LARGE SCALE GENOMIC DNA]</scope>
    <source>
        <strain>JEC21 / ATCC MYA-565</strain>
    </source>
</reference>
<proteinExistence type="inferred from homology"/>
<accession>P0CN48</accession>
<accession>Q55XD3</accession>
<accession>Q5KMK1</accession>
<protein>
    <recommendedName>
        <fullName evidence="2">Eukaryotic translation initiation factor 3 subunit D</fullName>
        <shortName evidence="2">eIF3d</shortName>
    </recommendedName>
</protein>